<organism>
    <name type="scientific">Arabidopsis thaliana</name>
    <name type="common">Mouse-ear cress</name>
    <dbReference type="NCBI Taxonomy" id="3702"/>
    <lineage>
        <taxon>Eukaryota</taxon>
        <taxon>Viridiplantae</taxon>
        <taxon>Streptophyta</taxon>
        <taxon>Embryophyta</taxon>
        <taxon>Tracheophyta</taxon>
        <taxon>Spermatophyta</taxon>
        <taxon>Magnoliopsida</taxon>
        <taxon>eudicotyledons</taxon>
        <taxon>Gunneridae</taxon>
        <taxon>Pentapetalae</taxon>
        <taxon>rosids</taxon>
        <taxon>malvids</taxon>
        <taxon>Brassicales</taxon>
        <taxon>Brassicaceae</taxon>
        <taxon>Camelineae</taxon>
        <taxon>Arabidopsis</taxon>
    </lineage>
</organism>
<keyword id="KW-0433">Leucine-rich repeat</keyword>
<keyword id="KW-1185">Reference proteome</keyword>
<keyword id="KW-0677">Repeat</keyword>
<proteinExistence type="evidence at transcript level"/>
<dbReference type="EMBL" id="AC051629">
    <property type="protein sequence ID" value="AAF99838.1"/>
    <property type="molecule type" value="Genomic_DNA"/>
</dbReference>
<dbReference type="EMBL" id="CP002684">
    <property type="protein sequence ID" value="AEE29523.1"/>
    <property type="molecule type" value="Genomic_DNA"/>
</dbReference>
<dbReference type="EMBL" id="CP002684">
    <property type="protein sequence ID" value="ANM60465.1"/>
    <property type="molecule type" value="Genomic_DNA"/>
</dbReference>
<dbReference type="EMBL" id="CP002684">
    <property type="protein sequence ID" value="ANM60466.1"/>
    <property type="molecule type" value="Genomic_DNA"/>
</dbReference>
<dbReference type="PIR" id="H86304">
    <property type="entry name" value="H86304"/>
</dbReference>
<dbReference type="RefSeq" id="NP_001322750.1">
    <property type="nucleotide sequence ID" value="NM_001332271.1"/>
</dbReference>
<dbReference type="RefSeq" id="NP_001322751.1">
    <property type="nucleotide sequence ID" value="NM_001332270.1"/>
</dbReference>
<dbReference type="RefSeq" id="NP_173137.1">
    <property type="nucleotide sequence ID" value="NM_101554.2"/>
</dbReference>
<dbReference type="FunCoup" id="Q9FZ52">
    <property type="interactions" value="45"/>
</dbReference>
<dbReference type="PaxDb" id="3702-AT1G16930.1"/>
<dbReference type="ProteomicsDB" id="222589"/>
<dbReference type="EnsemblPlants" id="AT1G16930.1">
    <property type="protein sequence ID" value="AT1G16930.1"/>
    <property type="gene ID" value="AT1G16930"/>
</dbReference>
<dbReference type="EnsemblPlants" id="AT1G16930.2">
    <property type="protein sequence ID" value="AT1G16930.2"/>
    <property type="gene ID" value="AT1G16930"/>
</dbReference>
<dbReference type="EnsemblPlants" id="AT1G16930.3">
    <property type="protein sequence ID" value="AT1G16930.3"/>
    <property type="gene ID" value="AT1G16930"/>
</dbReference>
<dbReference type="GeneID" id="838264"/>
<dbReference type="Gramene" id="AT1G16930.1">
    <property type="protein sequence ID" value="AT1G16930.1"/>
    <property type="gene ID" value="AT1G16930"/>
</dbReference>
<dbReference type="Gramene" id="AT1G16930.2">
    <property type="protein sequence ID" value="AT1G16930.2"/>
    <property type="gene ID" value="AT1G16930"/>
</dbReference>
<dbReference type="Gramene" id="AT1G16930.3">
    <property type="protein sequence ID" value="AT1G16930.3"/>
    <property type="gene ID" value="AT1G16930"/>
</dbReference>
<dbReference type="KEGG" id="ath:AT1G16930"/>
<dbReference type="Araport" id="AT1G16930"/>
<dbReference type="TAIR" id="AT1G16930"/>
<dbReference type="eggNOG" id="ENOG502RYTW">
    <property type="taxonomic scope" value="Eukaryota"/>
</dbReference>
<dbReference type="HOGENOM" id="CLU_010721_1_3_1"/>
<dbReference type="InParanoid" id="Q9FZ52"/>
<dbReference type="OMA" id="FKSWINA"/>
<dbReference type="OrthoDB" id="594804at2759"/>
<dbReference type="PhylomeDB" id="Q9FZ52"/>
<dbReference type="PRO" id="PR:Q9FZ52"/>
<dbReference type="Proteomes" id="UP000006548">
    <property type="component" value="Chromosome 1"/>
</dbReference>
<dbReference type="ExpressionAtlas" id="Q9FZ52">
    <property type="expression patterns" value="baseline and differential"/>
</dbReference>
<dbReference type="CDD" id="cd22160">
    <property type="entry name" value="F-box_AtFBL13-like"/>
    <property type="match status" value="1"/>
</dbReference>
<dbReference type="Gene3D" id="3.80.10.10">
    <property type="entry name" value="Ribonuclease Inhibitor"/>
    <property type="match status" value="1"/>
</dbReference>
<dbReference type="InterPro" id="IPR036047">
    <property type="entry name" value="F-box-like_dom_sf"/>
</dbReference>
<dbReference type="InterPro" id="IPR053781">
    <property type="entry name" value="F-box_AtFBL13-like"/>
</dbReference>
<dbReference type="InterPro" id="IPR001810">
    <property type="entry name" value="F-box_dom"/>
</dbReference>
<dbReference type="InterPro" id="IPR006566">
    <property type="entry name" value="FBD"/>
</dbReference>
<dbReference type="InterPro" id="IPR050232">
    <property type="entry name" value="FBL13/AtMIF1-like"/>
</dbReference>
<dbReference type="InterPro" id="IPR032675">
    <property type="entry name" value="LRR_dom_sf"/>
</dbReference>
<dbReference type="InterPro" id="IPR055411">
    <property type="entry name" value="LRR_FXL15/At3g58940/PEG3-like"/>
</dbReference>
<dbReference type="InterPro" id="IPR013101">
    <property type="entry name" value="LRR_PRU1-like"/>
</dbReference>
<dbReference type="PANTHER" id="PTHR31900">
    <property type="entry name" value="F-BOX/RNI SUPERFAMILY PROTEIN-RELATED"/>
    <property type="match status" value="1"/>
</dbReference>
<dbReference type="PANTHER" id="PTHR31900:SF33">
    <property type="entry name" value="PROTEIN WITH RNI-LIKE_FBD-LIKE DOMAIN"/>
    <property type="match status" value="1"/>
</dbReference>
<dbReference type="Pfam" id="PF00646">
    <property type="entry name" value="F-box"/>
    <property type="match status" value="1"/>
</dbReference>
<dbReference type="Pfam" id="PF08387">
    <property type="entry name" value="FBD"/>
    <property type="match status" value="1"/>
</dbReference>
<dbReference type="Pfam" id="PF07723">
    <property type="entry name" value="LRR_2"/>
    <property type="match status" value="1"/>
</dbReference>
<dbReference type="Pfam" id="PF24758">
    <property type="entry name" value="LRR_At5g56370"/>
    <property type="match status" value="1"/>
</dbReference>
<dbReference type="SMART" id="SM00579">
    <property type="entry name" value="FBD"/>
    <property type="match status" value="1"/>
</dbReference>
<dbReference type="SUPFAM" id="SSF81383">
    <property type="entry name" value="F-box domain"/>
    <property type="match status" value="1"/>
</dbReference>
<dbReference type="SUPFAM" id="SSF52047">
    <property type="entry name" value="RNI-like"/>
    <property type="match status" value="1"/>
</dbReference>
<dbReference type="PROSITE" id="PS50181">
    <property type="entry name" value="FBOX"/>
    <property type="match status" value="1"/>
</dbReference>
<protein>
    <recommendedName>
        <fullName>F-box/FBD/LRR-repeat protein At1g16930</fullName>
    </recommendedName>
</protein>
<feature type="chain" id="PRO_0000283096" description="F-box/FBD/LRR-repeat protein At1g16930">
    <location>
        <begin position="1"/>
        <end position="449"/>
    </location>
</feature>
<feature type="domain" description="F-box" evidence="1">
    <location>
        <begin position="14"/>
        <end position="60"/>
    </location>
</feature>
<feature type="repeat" description="LRR 1">
    <location>
        <begin position="62"/>
        <end position="93"/>
    </location>
</feature>
<feature type="repeat" description="LRR 2">
    <location>
        <begin position="123"/>
        <end position="150"/>
    </location>
</feature>
<feature type="repeat" description="LRR 3">
    <location>
        <begin position="172"/>
        <end position="197"/>
    </location>
</feature>
<feature type="repeat" description="LRR 4">
    <location>
        <begin position="218"/>
        <end position="244"/>
    </location>
</feature>
<feature type="domain" description="FBD">
    <location>
        <begin position="362"/>
        <end position="425"/>
    </location>
</feature>
<accession>Q9FZ52</accession>
<sequence>MDDETSVKEKQRNSDRISNLPDSLLCQILSDLSTKESVCTSVLSKRWRNLWLHVPVLDLDSNNFPDDDVFVSFVNRFLGSENEQHLERFKLIYEVNEHDASRFKSWINAVIKRRVCHFNVHNEVDDDDELVKMPLSLYSCERLVNLQLYRVALDHPESVSLPCVKIMHLDMVKYDADSTLEILISGCPVLEELTIVRDPNDSLEVVCVRSQSLKSFKIDSERYESQNHVVTIDAPRLEYMNLCDHRSDSFIIHNIGPFAKVDIDVIFNVEYNDPLEPDDSSKIAMLGKFLTGLSTVSEMVISSDTLQVIHDYCKMEQLPQFSNLSRLHAYFEDTWWEMLPTFLESFPNLHSLVMEFDCFPDTEQIDLSYVPQCFLSSLEFVHLKTPYVVNMQKEGRPLTGTSSKRKLAKYFLENGAALKKLTVSASFCNIIDEIKAIPRSSTSCQVVMD</sequence>
<name>FDL3_ARATH</name>
<gene>
    <name type="ordered locus">At1g16930</name>
    <name type="ORF">F6I1.6</name>
</gene>
<reference key="1">
    <citation type="journal article" date="2000" name="Nature">
        <title>Sequence and analysis of chromosome 1 of the plant Arabidopsis thaliana.</title>
        <authorList>
            <person name="Theologis A."/>
            <person name="Ecker J.R."/>
            <person name="Palm C.J."/>
            <person name="Federspiel N.A."/>
            <person name="Kaul S."/>
            <person name="White O."/>
            <person name="Alonso J."/>
            <person name="Altafi H."/>
            <person name="Araujo R."/>
            <person name="Bowman C.L."/>
            <person name="Brooks S.Y."/>
            <person name="Buehler E."/>
            <person name="Chan A."/>
            <person name="Chao Q."/>
            <person name="Chen H."/>
            <person name="Cheuk R.F."/>
            <person name="Chin C.W."/>
            <person name="Chung M.K."/>
            <person name="Conn L."/>
            <person name="Conway A.B."/>
            <person name="Conway A.R."/>
            <person name="Creasy T.H."/>
            <person name="Dewar K."/>
            <person name="Dunn P."/>
            <person name="Etgu P."/>
            <person name="Feldblyum T.V."/>
            <person name="Feng J.-D."/>
            <person name="Fong B."/>
            <person name="Fujii C.Y."/>
            <person name="Gill J.E."/>
            <person name="Goldsmith A.D."/>
            <person name="Haas B."/>
            <person name="Hansen N.F."/>
            <person name="Hughes B."/>
            <person name="Huizar L."/>
            <person name="Hunter J.L."/>
            <person name="Jenkins J."/>
            <person name="Johnson-Hopson C."/>
            <person name="Khan S."/>
            <person name="Khaykin E."/>
            <person name="Kim C.J."/>
            <person name="Koo H.L."/>
            <person name="Kremenetskaia I."/>
            <person name="Kurtz D.B."/>
            <person name="Kwan A."/>
            <person name="Lam B."/>
            <person name="Langin-Hooper S."/>
            <person name="Lee A."/>
            <person name="Lee J.M."/>
            <person name="Lenz C.A."/>
            <person name="Li J.H."/>
            <person name="Li Y.-P."/>
            <person name="Lin X."/>
            <person name="Liu S.X."/>
            <person name="Liu Z.A."/>
            <person name="Luros J.S."/>
            <person name="Maiti R."/>
            <person name="Marziali A."/>
            <person name="Militscher J."/>
            <person name="Miranda M."/>
            <person name="Nguyen M."/>
            <person name="Nierman W.C."/>
            <person name="Osborne B.I."/>
            <person name="Pai G."/>
            <person name="Peterson J."/>
            <person name="Pham P.K."/>
            <person name="Rizzo M."/>
            <person name="Rooney T."/>
            <person name="Rowley D."/>
            <person name="Sakano H."/>
            <person name="Salzberg S.L."/>
            <person name="Schwartz J.R."/>
            <person name="Shinn P."/>
            <person name="Southwick A.M."/>
            <person name="Sun H."/>
            <person name="Tallon L.J."/>
            <person name="Tambunga G."/>
            <person name="Toriumi M.J."/>
            <person name="Town C.D."/>
            <person name="Utterback T."/>
            <person name="Van Aken S."/>
            <person name="Vaysberg M."/>
            <person name="Vysotskaia V.S."/>
            <person name="Walker M."/>
            <person name="Wu D."/>
            <person name="Yu G."/>
            <person name="Fraser C.M."/>
            <person name="Venter J.C."/>
            <person name="Davis R.W."/>
        </authorList>
    </citation>
    <scope>NUCLEOTIDE SEQUENCE [LARGE SCALE GENOMIC DNA]</scope>
    <source>
        <strain>cv. Columbia</strain>
    </source>
</reference>
<reference key="2">
    <citation type="journal article" date="2017" name="Plant J.">
        <title>Araport11: a complete reannotation of the Arabidopsis thaliana reference genome.</title>
        <authorList>
            <person name="Cheng C.Y."/>
            <person name="Krishnakumar V."/>
            <person name="Chan A.P."/>
            <person name="Thibaud-Nissen F."/>
            <person name="Schobel S."/>
            <person name="Town C.D."/>
        </authorList>
    </citation>
    <scope>GENOME REANNOTATION</scope>
    <source>
        <strain>cv. Columbia</strain>
    </source>
</reference>
<evidence type="ECO:0000255" key="1">
    <source>
        <dbReference type="PROSITE-ProRule" id="PRU00080"/>
    </source>
</evidence>